<gene>
    <name evidence="1" type="primary">der</name>
    <name type="synonym">engA</name>
    <name type="ordered locus">Cvib_0455</name>
</gene>
<evidence type="ECO:0000255" key="1">
    <source>
        <dbReference type="HAMAP-Rule" id="MF_00195"/>
    </source>
</evidence>
<protein>
    <recommendedName>
        <fullName evidence="1">GTPase Der</fullName>
    </recommendedName>
    <alternativeName>
        <fullName evidence="1">GTP-binding protein EngA</fullName>
    </alternativeName>
</protein>
<sequence>MKPLIALVGRPNVGKSTLFNRILRERAAIVDSTPGVTRDRHISEGFWQGRAFRLMDTGGYAPEDGVISNAMLEQTMTAINDADIVVFVADARAGLSYDDLELAKVLRQRFSHKPVFFAVNKVESPQLAYEAASFVSTGYTEPWCISAKDGSGVADLLDAILLEMPESDADQEEDGAIRLAVVGRPNVGKSSFVNALLGNNRQIVSDIPGTTRDAIDTRFTRNQQDFLLIDTAGLRKRTKISAGIEYYSSLRSEKAIERCEVVMVMIDAGPGIEKQDLKIINMATERKRAVLLLVNKWDLIEKDSKTSKQYEDTLRSHMGNLAYVPVLFISALTKKNLYRAIDTAREIRDNRARKISTSALNRFLEEALAANPPSSKGGTELKIKYMTQIQAAWPVFAFFCNNPELVQTNFRKFLENRLREKFDLKGVTISLRFLQK</sequence>
<organism>
    <name type="scientific">Chlorobium phaeovibrioides (strain DSM 265 / 1930)</name>
    <name type="common">Prosthecochloris vibrioformis (strain DSM 265)</name>
    <dbReference type="NCBI Taxonomy" id="290318"/>
    <lineage>
        <taxon>Bacteria</taxon>
        <taxon>Pseudomonadati</taxon>
        <taxon>Chlorobiota</taxon>
        <taxon>Chlorobiia</taxon>
        <taxon>Chlorobiales</taxon>
        <taxon>Chlorobiaceae</taxon>
        <taxon>Chlorobium/Pelodictyon group</taxon>
        <taxon>Chlorobium</taxon>
    </lineage>
</organism>
<reference key="1">
    <citation type="submission" date="2007-03" db="EMBL/GenBank/DDBJ databases">
        <title>Complete sequence of Prosthecochloris vibrioformis DSM 265.</title>
        <authorList>
            <consortium name="US DOE Joint Genome Institute"/>
            <person name="Copeland A."/>
            <person name="Lucas S."/>
            <person name="Lapidus A."/>
            <person name="Barry K."/>
            <person name="Detter J.C."/>
            <person name="Glavina del Rio T."/>
            <person name="Hammon N."/>
            <person name="Israni S."/>
            <person name="Pitluck S."/>
            <person name="Schmutz J."/>
            <person name="Larimer F."/>
            <person name="Land M."/>
            <person name="Hauser L."/>
            <person name="Mikhailova N."/>
            <person name="Li T."/>
            <person name="Overmann J."/>
            <person name="Schuster S.C."/>
            <person name="Bryant D.A."/>
            <person name="Richardson P."/>
        </authorList>
    </citation>
    <scope>NUCLEOTIDE SEQUENCE [LARGE SCALE GENOMIC DNA]</scope>
    <source>
        <strain>DSM 265 / 1930</strain>
    </source>
</reference>
<proteinExistence type="inferred from homology"/>
<dbReference type="EMBL" id="CP000607">
    <property type="protein sequence ID" value="ABP36477.1"/>
    <property type="molecule type" value="Genomic_DNA"/>
</dbReference>
<dbReference type="SMR" id="A4SDB8"/>
<dbReference type="STRING" id="290318.Cvib_0455"/>
<dbReference type="KEGG" id="pvi:Cvib_0455"/>
<dbReference type="eggNOG" id="COG1160">
    <property type="taxonomic scope" value="Bacteria"/>
</dbReference>
<dbReference type="HOGENOM" id="CLU_016077_6_2_10"/>
<dbReference type="OrthoDB" id="9805918at2"/>
<dbReference type="GO" id="GO:0005525">
    <property type="term" value="F:GTP binding"/>
    <property type="evidence" value="ECO:0007669"/>
    <property type="project" value="UniProtKB-UniRule"/>
</dbReference>
<dbReference type="GO" id="GO:0042254">
    <property type="term" value="P:ribosome biogenesis"/>
    <property type="evidence" value="ECO:0007669"/>
    <property type="project" value="UniProtKB-KW"/>
</dbReference>
<dbReference type="CDD" id="cd01894">
    <property type="entry name" value="EngA1"/>
    <property type="match status" value="1"/>
</dbReference>
<dbReference type="CDD" id="cd01895">
    <property type="entry name" value="EngA2"/>
    <property type="match status" value="1"/>
</dbReference>
<dbReference type="FunFam" id="3.30.300.20:FF:000004">
    <property type="entry name" value="GTPase Der"/>
    <property type="match status" value="1"/>
</dbReference>
<dbReference type="FunFam" id="3.40.50.300:FF:000040">
    <property type="entry name" value="GTPase Der"/>
    <property type="match status" value="1"/>
</dbReference>
<dbReference type="Gene3D" id="3.30.300.20">
    <property type="match status" value="1"/>
</dbReference>
<dbReference type="Gene3D" id="3.40.50.300">
    <property type="entry name" value="P-loop containing nucleotide triphosphate hydrolases"/>
    <property type="match status" value="2"/>
</dbReference>
<dbReference type="HAMAP" id="MF_00195">
    <property type="entry name" value="GTPase_Der"/>
    <property type="match status" value="1"/>
</dbReference>
<dbReference type="InterPro" id="IPR031166">
    <property type="entry name" value="G_ENGA"/>
</dbReference>
<dbReference type="InterPro" id="IPR006073">
    <property type="entry name" value="GTP-bd"/>
</dbReference>
<dbReference type="InterPro" id="IPR016484">
    <property type="entry name" value="GTPase_Der"/>
</dbReference>
<dbReference type="InterPro" id="IPR032859">
    <property type="entry name" value="KH_dom-like"/>
</dbReference>
<dbReference type="InterPro" id="IPR015946">
    <property type="entry name" value="KH_dom-like_a/b"/>
</dbReference>
<dbReference type="InterPro" id="IPR027417">
    <property type="entry name" value="P-loop_NTPase"/>
</dbReference>
<dbReference type="InterPro" id="IPR005225">
    <property type="entry name" value="Small_GTP-bd"/>
</dbReference>
<dbReference type="NCBIfam" id="TIGR03594">
    <property type="entry name" value="GTPase_EngA"/>
    <property type="match status" value="1"/>
</dbReference>
<dbReference type="NCBIfam" id="TIGR00231">
    <property type="entry name" value="small_GTP"/>
    <property type="match status" value="2"/>
</dbReference>
<dbReference type="PANTHER" id="PTHR43834">
    <property type="entry name" value="GTPASE DER"/>
    <property type="match status" value="1"/>
</dbReference>
<dbReference type="PANTHER" id="PTHR43834:SF6">
    <property type="entry name" value="GTPASE DER"/>
    <property type="match status" value="1"/>
</dbReference>
<dbReference type="Pfam" id="PF14714">
    <property type="entry name" value="KH_dom-like"/>
    <property type="match status" value="1"/>
</dbReference>
<dbReference type="Pfam" id="PF01926">
    <property type="entry name" value="MMR_HSR1"/>
    <property type="match status" value="2"/>
</dbReference>
<dbReference type="PIRSF" id="PIRSF006485">
    <property type="entry name" value="GTP-binding_EngA"/>
    <property type="match status" value="1"/>
</dbReference>
<dbReference type="PRINTS" id="PR00326">
    <property type="entry name" value="GTP1OBG"/>
</dbReference>
<dbReference type="SUPFAM" id="SSF52540">
    <property type="entry name" value="P-loop containing nucleoside triphosphate hydrolases"/>
    <property type="match status" value="2"/>
</dbReference>
<dbReference type="PROSITE" id="PS51712">
    <property type="entry name" value="G_ENGA"/>
    <property type="match status" value="2"/>
</dbReference>
<keyword id="KW-0342">GTP-binding</keyword>
<keyword id="KW-0547">Nucleotide-binding</keyword>
<keyword id="KW-0677">Repeat</keyword>
<keyword id="KW-0690">Ribosome biogenesis</keyword>
<feature type="chain" id="PRO_1000077666" description="GTPase Der">
    <location>
        <begin position="1"/>
        <end position="436"/>
    </location>
</feature>
<feature type="domain" description="EngA-type G 1">
    <location>
        <begin position="3"/>
        <end position="168"/>
    </location>
</feature>
<feature type="domain" description="EngA-type G 2">
    <location>
        <begin position="177"/>
        <end position="352"/>
    </location>
</feature>
<feature type="domain" description="KH-like" evidence="1">
    <location>
        <begin position="353"/>
        <end position="436"/>
    </location>
</feature>
<feature type="binding site" evidence="1">
    <location>
        <begin position="9"/>
        <end position="16"/>
    </location>
    <ligand>
        <name>GTP</name>
        <dbReference type="ChEBI" id="CHEBI:37565"/>
        <label>1</label>
    </ligand>
</feature>
<feature type="binding site" evidence="1">
    <location>
        <begin position="56"/>
        <end position="60"/>
    </location>
    <ligand>
        <name>GTP</name>
        <dbReference type="ChEBI" id="CHEBI:37565"/>
        <label>1</label>
    </ligand>
</feature>
<feature type="binding site" evidence="1">
    <location>
        <begin position="120"/>
        <end position="123"/>
    </location>
    <ligand>
        <name>GTP</name>
        <dbReference type="ChEBI" id="CHEBI:37565"/>
        <label>1</label>
    </ligand>
</feature>
<feature type="binding site" evidence="1">
    <location>
        <begin position="183"/>
        <end position="190"/>
    </location>
    <ligand>
        <name>GTP</name>
        <dbReference type="ChEBI" id="CHEBI:37565"/>
        <label>2</label>
    </ligand>
</feature>
<feature type="binding site" evidence="1">
    <location>
        <begin position="230"/>
        <end position="234"/>
    </location>
    <ligand>
        <name>GTP</name>
        <dbReference type="ChEBI" id="CHEBI:37565"/>
        <label>2</label>
    </ligand>
</feature>
<feature type="binding site" evidence="1">
    <location>
        <begin position="295"/>
        <end position="298"/>
    </location>
    <ligand>
        <name>GTP</name>
        <dbReference type="ChEBI" id="CHEBI:37565"/>
        <label>2</label>
    </ligand>
</feature>
<comment type="function">
    <text evidence="1">GTPase that plays an essential role in the late steps of ribosome biogenesis.</text>
</comment>
<comment type="subunit">
    <text evidence="1">Associates with the 50S ribosomal subunit.</text>
</comment>
<comment type="similarity">
    <text evidence="1">Belongs to the TRAFAC class TrmE-Era-EngA-EngB-Septin-like GTPase superfamily. EngA (Der) GTPase family.</text>
</comment>
<accession>A4SDB8</accession>
<name>DER_CHLPM</name>